<organism>
    <name type="scientific">Methanococcus maripaludis (strain C7 / ATCC BAA-1331)</name>
    <dbReference type="NCBI Taxonomy" id="426368"/>
    <lineage>
        <taxon>Archaea</taxon>
        <taxon>Methanobacteriati</taxon>
        <taxon>Methanobacteriota</taxon>
        <taxon>Methanomada group</taxon>
        <taxon>Methanococci</taxon>
        <taxon>Methanococcales</taxon>
        <taxon>Methanococcaceae</taxon>
        <taxon>Methanococcus</taxon>
    </lineage>
</organism>
<name>HIS6_METM7</name>
<gene>
    <name evidence="1" type="primary">hisF</name>
    <name type="ordered locus">MmarC7_0997</name>
</gene>
<sequence>MLTKRIIPCLDIKEGRVVKGTNFVELRDAGDPVELSKIYNEQGADELVFLDITASFEKRDIIIDVVKRTAEQVFIPLTVGGGIKTVDDFRKILRAGADKISINTSAVKTPELIKEASEIFGTQCVVVAMDVKRNYITNPQNENLKDKNIFETKLGSCWFEVYIYGGREGTGIDAIDWAKKVENLGAGEILLTSMDADGTKDGYDLVLTRAISENTKLPIIASGGCGNSDHVVDAFKDGKADAALMASILHYRECTVNDLKKEVEKNNIPVRF</sequence>
<reference key="1">
    <citation type="submission" date="2007-06" db="EMBL/GenBank/DDBJ databases">
        <title>Complete sequence of Methanococcus maripaludis C7.</title>
        <authorList>
            <consortium name="US DOE Joint Genome Institute"/>
            <person name="Copeland A."/>
            <person name="Lucas S."/>
            <person name="Lapidus A."/>
            <person name="Barry K."/>
            <person name="Glavina del Rio T."/>
            <person name="Dalin E."/>
            <person name="Tice H."/>
            <person name="Pitluck S."/>
            <person name="Clum A."/>
            <person name="Schmutz J."/>
            <person name="Larimer F."/>
            <person name="Land M."/>
            <person name="Hauser L."/>
            <person name="Kyrpides N."/>
            <person name="Anderson I."/>
            <person name="Sieprawska-Lupa M."/>
            <person name="Whitman W.B."/>
            <person name="Richardson P."/>
        </authorList>
    </citation>
    <scope>NUCLEOTIDE SEQUENCE [LARGE SCALE GENOMIC DNA]</scope>
    <source>
        <strain>C7 / ATCC BAA-1331</strain>
    </source>
</reference>
<comment type="function">
    <text evidence="1">IGPS catalyzes the conversion of PRFAR and glutamine to IGP, AICAR and glutamate. The HisF subunit catalyzes the cyclization activity that produces IGP and AICAR from PRFAR using the ammonia provided by the HisH subunit.</text>
</comment>
<comment type="catalytic activity">
    <reaction evidence="1">
        <text>5-[(5-phospho-1-deoxy-D-ribulos-1-ylimino)methylamino]-1-(5-phospho-beta-D-ribosyl)imidazole-4-carboxamide + L-glutamine = D-erythro-1-(imidazol-4-yl)glycerol 3-phosphate + 5-amino-1-(5-phospho-beta-D-ribosyl)imidazole-4-carboxamide + L-glutamate + H(+)</text>
        <dbReference type="Rhea" id="RHEA:24793"/>
        <dbReference type="ChEBI" id="CHEBI:15378"/>
        <dbReference type="ChEBI" id="CHEBI:29985"/>
        <dbReference type="ChEBI" id="CHEBI:58278"/>
        <dbReference type="ChEBI" id="CHEBI:58359"/>
        <dbReference type="ChEBI" id="CHEBI:58475"/>
        <dbReference type="ChEBI" id="CHEBI:58525"/>
        <dbReference type="EC" id="4.3.2.10"/>
    </reaction>
</comment>
<comment type="pathway">
    <text evidence="1">Amino-acid biosynthesis; L-histidine biosynthesis; L-histidine from 5-phospho-alpha-D-ribose 1-diphosphate: step 5/9.</text>
</comment>
<comment type="subunit">
    <text evidence="1">Heterodimer of HisH and HisF.</text>
</comment>
<comment type="subcellular location">
    <subcellularLocation>
        <location evidence="1">Cytoplasm</location>
    </subcellularLocation>
</comment>
<comment type="similarity">
    <text evidence="1">Belongs to the HisA/HisF family.</text>
</comment>
<dbReference type="EC" id="4.3.2.10" evidence="1"/>
<dbReference type="EMBL" id="CP000745">
    <property type="protein sequence ID" value="ABR66064.1"/>
    <property type="molecule type" value="Genomic_DNA"/>
</dbReference>
<dbReference type="SMR" id="A6VHY8"/>
<dbReference type="STRING" id="426368.MmarC7_0997"/>
<dbReference type="KEGG" id="mmz:MmarC7_0997"/>
<dbReference type="eggNOG" id="arCOG00617">
    <property type="taxonomic scope" value="Archaea"/>
</dbReference>
<dbReference type="HOGENOM" id="CLU_048577_4_0_2"/>
<dbReference type="OrthoDB" id="6261at2157"/>
<dbReference type="UniPathway" id="UPA00031">
    <property type="reaction ID" value="UER00010"/>
</dbReference>
<dbReference type="GO" id="GO:0005737">
    <property type="term" value="C:cytoplasm"/>
    <property type="evidence" value="ECO:0007669"/>
    <property type="project" value="UniProtKB-SubCell"/>
</dbReference>
<dbReference type="GO" id="GO:0000107">
    <property type="term" value="F:imidazoleglycerol-phosphate synthase activity"/>
    <property type="evidence" value="ECO:0007669"/>
    <property type="project" value="UniProtKB-UniRule"/>
</dbReference>
<dbReference type="GO" id="GO:0016829">
    <property type="term" value="F:lyase activity"/>
    <property type="evidence" value="ECO:0007669"/>
    <property type="project" value="UniProtKB-KW"/>
</dbReference>
<dbReference type="GO" id="GO:0000105">
    <property type="term" value="P:L-histidine biosynthetic process"/>
    <property type="evidence" value="ECO:0007669"/>
    <property type="project" value="UniProtKB-UniRule"/>
</dbReference>
<dbReference type="CDD" id="cd04731">
    <property type="entry name" value="HisF"/>
    <property type="match status" value="1"/>
</dbReference>
<dbReference type="FunFam" id="3.20.20.70:FF:000006">
    <property type="entry name" value="Imidazole glycerol phosphate synthase subunit HisF"/>
    <property type="match status" value="1"/>
</dbReference>
<dbReference type="Gene3D" id="3.20.20.70">
    <property type="entry name" value="Aldolase class I"/>
    <property type="match status" value="1"/>
</dbReference>
<dbReference type="HAMAP" id="MF_01013">
    <property type="entry name" value="HisF"/>
    <property type="match status" value="1"/>
</dbReference>
<dbReference type="InterPro" id="IPR013785">
    <property type="entry name" value="Aldolase_TIM"/>
</dbReference>
<dbReference type="InterPro" id="IPR006062">
    <property type="entry name" value="His_biosynth"/>
</dbReference>
<dbReference type="InterPro" id="IPR004651">
    <property type="entry name" value="HisF"/>
</dbReference>
<dbReference type="InterPro" id="IPR050064">
    <property type="entry name" value="IGPS_HisA/HisF"/>
</dbReference>
<dbReference type="InterPro" id="IPR011060">
    <property type="entry name" value="RibuloseP-bd_barrel"/>
</dbReference>
<dbReference type="NCBIfam" id="TIGR00735">
    <property type="entry name" value="hisF"/>
    <property type="match status" value="1"/>
</dbReference>
<dbReference type="PANTHER" id="PTHR21235:SF2">
    <property type="entry name" value="IMIDAZOLE GLYCEROL PHOSPHATE SYNTHASE HISHF"/>
    <property type="match status" value="1"/>
</dbReference>
<dbReference type="PANTHER" id="PTHR21235">
    <property type="entry name" value="IMIDAZOLE GLYCEROL PHOSPHATE SYNTHASE SUBUNIT HISF/H IGP SYNTHASE SUBUNIT HISF/H"/>
    <property type="match status" value="1"/>
</dbReference>
<dbReference type="Pfam" id="PF00977">
    <property type="entry name" value="His_biosynth"/>
    <property type="match status" value="1"/>
</dbReference>
<dbReference type="SUPFAM" id="SSF51366">
    <property type="entry name" value="Ribulose-phoshate binding barrel"/>
    <property type="match status" value="1"/>
</dbReference>
<feature type="chain" id="PRO_1000063087" description="Imidazole glycerol phosphate synthase subunit HisF">
    <location>
        <begin position="1"/>
        <end position="272"/>
    </location>
</feature>
<feature type="active site" evidence="1">
    <location>
        <position position="11"/>
    </location>
</feature>
<feature type="active site" evidence="1">
    <location>
        <position position="130"/>
    </location>
</feature>
<proteinExistence type="inferred from homology"/>
<accession>A6VHY8</accession>
<protein>
    <recommendedName>
        <fullName evidence="1">Imidazole glycerol phosphate synthase subunit HisF</fullName>
        <ecNumber evidence="1">4.3.2.10</ecNumber>
    </recommendedName>
    <alternativeName>
        <fullName evidence="1">IGP synthase cyclase subunit</fullName>
    </alternativeName>
    <alternativeName>
        <fullName evidence="1">IGP synthase subunit HisF</fullName>
    </alternativeName>
    <alternativeName>
        <fullName evidence="1">ImGP synthase subunit HisF</fullName>
        <shortName evidence="1">IGPS subunit HisF</shortName>
    </alternativeName>
</protein>
<evidence type="ECO:0000255" key="1">
    <source>
        <dbReference type="HAMAP-Rule" id="MF_01013"/>
    </source>
</evidence>
<keyword id="KW-0028">Amino-acid biosynthesis</keyword>
<keyword id="KW-0963">Cytoplasm</keyword>
<keyword id="KW-0368">Histidine biosynthesis</keyword>
<keyword id="KW-0456">Lyase</keyword>